<evidence type="ECO:0000255" key="1">
    <source>
        <dbReference type="HAMAP-Rule" id="MF_00111"/>
    </source>
</evidence>
<feature type="chain" id="PRO_0000178889" description="UDP-N-acetylglucosamine 1-carboxyvinyltransferase">
    <location>
        <begin position="1"/>
        <end position="418"/>
    </location>
</feature>
<feature type="active site" description="Proton donor" evidence="1">
    <location>
        <position position="117"/>
    </location>
</feature>
<feature type="binding site" evidence="1">
    <location>
        <begin position="23"/>
        <end position="24"/>
    </location>
    <ligand>
        <name>phosphoenolpyruvate</name>
        <dbReference type="ChEBI" id="CHEBI:58702"/>
    </ligand>
</feature>
<feature type="binding site" evidence="1">
    <location>
        <position position="93"/>
    </location>
    <ligand>
        <name>UDP-N-acetyl-alpha-D-glucosamine</name>
        <dbReference type="ChEBI" id="CHEBI:57705"/>
    </ligand>
</feature>
<feature type="binding site" evidence="1">
    <location>
        <position position="305"/>
    </location>
    <ligand>
        <name>UDP-N-acetyl-alpha-D-glucosamine</name>
        <dbReference type="ChEBI" id="CHEBI:57705"/>
    </ligand>
</feature>
<feature type="binding site" evidence="1">
    <location>
        <position position="327"/>
    </location>
    <ligand>
        <name>UDP-N-acetyl-alpha-D-glucosamine</name>
        <dbReference type="ChEBI" id="CHEBI:57705"/>
    </ligand>
</feature>
<protein>
    <recommendedName>
        <fullName evidence="1">UDP-N-acetylglucosamine 1-carboxyvinyltransferase</fullName>
        <ecNumber evidence="1">2.5.1.7</ecNumber>
    </recommendedName>
    <alternativeName>
        <fullName evidence="1">Enoylpyruvate transferase</fullName>
    </alternativeName>
    <alternativeName>
        <fullName evidence="1">UDP-N-acetylglucosamine enolpyruvyl transferase</fullName>
        <shortName evidence="1">EPT</shortName>
    </alternativeName>
</protein>
<organism>
    <name type="scientific">Mycobacterium leprae (strain TN)</name>
    <dbReference type="NCBI Taxonomy" id="272631"/>
    <lineage>
        <taxon>Bacteria</taxon>
        <taxon>Bacillati</taxon>
        <taxon>Actinomycetota</taxon>
        <taxon>Actinomycetes</taxon>
        <taxon>Mycobacteriales</taxon>
        <taxon>Mycobacteriaceae</taxon>
        <taxon>Mycobacterium</taxon>
    </lineage>
</organism>
<reference key="1">
    <citation type="submission" date="1994-09" db="EMBL/GenBank/DDBJ databases">
        <authorList>
            <person name="Smith D.R."/>
            <person name="Robison K."/>
        </authorList>
    </citation>
    <scope>NUCLEOTIDE SEQUENCE [GENOMIC DNA]</scope>
</reference>
<reference key="2">
    <citation type="journal article" date="2001" name="Nature">
        <title>Massive gene decay in the leprosy bacillus.</title>
        <authorList>
            <person name="Cole S.T."/>
            <person name="Eiglmeier K."/>
            <person name="Parkhill J."/>
            <person name="James K.D."/>
            <person name="Thomson N.R."/>
            <person name="Wheeler P.R."/>
            <person name="Honore N."/>
            <person name="Garnier T."/>
            <person name="Churcher C.M."/>
            <person name="Harris D.E."/>
            <person name="Mungall K.L."/>
            <person name="Basham D."/>
            <person name="Brown D."/>
            <person name="Chillingworth T."/>
            <person name="Connor R."/>
            <person name="Davies R.M."/>
            <person name="Devlin K."/>
            <person name="Duthoy S."/>
            <person name="Feltwell T."/>
            <person name="Fraser A."/>
            <person name="Hamlin N."/>
            <person name="Holroyd S."/>
            <person name="Hornsby T."/>
            <person name="Jagels K."/>
            <person name="Lacroix C."/>
            <person name="Maclean J."/>
            <person name="Moule S."/>
            <person name="Murphy L.D."/>
            <person name="Oliver K."/>
            <person name="Quail M.A."/>
            <person name="Rajandream M.A."/>
            <person name="Rutherford K.M."/>
            <person name="Rutter S."/>
            <person name="Seeger K."/>
            <person name="Simon S."/>
            <person name="Simmonds M."/>
            <person name="Skelton J."/>
            <person name="Squares R."/>
            <person name="Squares S."/>
            <person name="Stevens K."/>
            <person name="Taylor K."/>
            <person name="Whitehead S."/>
            <person name="Woodward J.R."/>
            <person name="Barrell B.G."/>
        </authorList>
    </citation>
    <scope>NUCLEOTIDE SEQUENCE [LARGE SCALE GENOMIC DNA]</scope>
    <source>
        <strain>TN</strain>
    </source>
</reference>
<dbReference type="EC" id="2.5.1.7" evidence="1"/>
<dbReference type="EMBL" id="U15186">
    <property type="protein sequence ID" value="AAA63098.1"/>
    <property type="molecule type" value="Genomic_DNA"/>
</dbReference>
<dbReference type="EMBL" id="AL583920">
    <property type="protein sequence ID" value="CAC31531.1"/>
    <property type="molecule type" value="Genomic_DNA"/>
</dbReference>
<dbReference type="PIR" id="T09969">
    <property type="entry name" value="T09969"/>
</dbReference>
<dbReference type="RefSeq" id="NP_301844.1">
    <property type="nucleotide sequence ID" value="NC_002677.1"/>
</dbReference>
<dbReference type="RefSeq" id="WP_010908168.1">
    <property type="nucleotide sequence ID" value="NC_002677.1"/>
</dbReference>
<dbReference type="SMR" id="P45821"/>
<dbReference type="STRING" id="272631.gene:17574977"/>
<dbReference type="KEGG" id="mle:ML1150"/>
<dbReference type="PATRIC" id="fig|272631.5.peg.2073"/>
<dbReference type="Leproma" id="ML1150"/>
<dbReference type="eggNOG" id="COG0766">
    <property type="taxonomic scope" value="Bacteria"/>
</dbReference>
<dbReference type="HOGENOM" id="CLU_027387_0_0_11"/>
<dbReference type="OrthoDB" id="9803760at2"/>
<dbReference type="UniPathway" id="UPA00219"/>
<dbReference type="Proteomes" id="UP000000806">
    <property type="component" value="Chromosome"/>
</dbReference>
<dbReference type="GO" id="GO:0005737">
    <property type="term" value="C:cytoplasm"/>
    <property type="evidence" value="ECO:0007669"/>
    <property type="project" value="UniProtKB-SubCell"/>
</dbReference>
<dbReference type="GO" id="GO:0008760">
    <property type="term" value="F:UDP-N-acetylglucosamine 1-carboxyvinyltransferase activity"/>
    <property type="evidence" value="ECO:0007669"/>
    <property type="project" value="UniProtKB-UniRule"/>
</dbReference>
<dbReference type="GO" id="GO:0051301">
    <property type="term" value="P:cell division"/>
    <property type="evidence" value="ECO:0007669"/>
    <property type="project" value="UniProtKB-KW"/>
</dbReference>
<dbReference type="GO" id="GO:0071555">
    <property type="term" value="P:cell wall organization"/>
    <property type="evidence" value="ECO:0007669"/>
    <property type="project" value="UniProtKB-KW"/>
</dbReference>
<dbReference type="GO" id="GO:0009252">
    <property type="term" value="P:peptidoglycan biosynthetic process"/>
    <property type="evidence" value="ECO:0007669"/>
    <property type="project" value="UniProtKB-UniRule"/>
</dbReference>
<dbReference type="GO" id="GO:0008360">
    <property type="term" value="P:regulation of cell shape"/>
    <property type="evidence" value="ECO:0007669"/>
    <property type="project" value="UniProtKB-KW"/>
</dbReference>
<dbReference type="GO" id="GO:0019277">
    <property type="term" value="P:UDP-N-acetylgalactosamine biosynthetic process"/>
    <property type="evidence" value="ECO:0007669"/>
    <property type="project" value="InterPro"/>
</dbReference>
<dbReference type="CDD" id="cd01555">
    <property type="entry name" value="UdpNAET"/>
    <property type="match status" value="1"/>
</dbReference>
<dbReference type="Gene3D" id="3.65.10.10">
    <property type="entry name" value="Enolpyruvate transferase domain"/>
    <property type="match status" value="2"/>
</dbReference>
<dbReference type="HAMAP" id="MF_00111">
    <property type="entry name" value="MurA"/>
    <property type="match status" value="1"/>
</dbReference>
<dbReference type="InterPro" id="IPR001986">
    <property type="entry name" value="Enolpyruvate_Tfrase_dom"/>
</dbReference>
<dbReference type="InterPro" id="IPR036968">
    <property type="entry name" value="Enolpyruvate_Tfrase_sf"/>
</dbReference>
<dbReference type="InterPro" id="IPR050068">
    <property type="entry name" value="MurA_subfamily"/>
</dbReference>
<dbReference type="InterPro" id="IPR013792">
    <property type="entry name" value="RNA3'P_cycl/enolpyr_Trfase_a/b"/>
</dbReference>
<dbReference type="InterPro" id="IPR005750">
    <property type="entry name" value="UDP_GlcNAc_COvinyl_MurA"/>
</dbReference>
<dbReference type="NCBIfam" id="TIGR01072">
    <property type="entry name" value="murA"/>
    <property type="match status" value="1"/>
</dbReference>
<dbReference type="NCBIfam" id="NF006873">
    <property type="entry name" value="PRK09369.1"/>
    <property type="match status" value="1"/>
</dbReference>
<dbReference type="PANTHER" id="PTHR43783">
    <property type="entry name" value="UDP-N-ACETYLGLUCOSAMINE 1-CARBOXYVINYLTRANSFERASE"/>
    <property type="match status" value="1"/>
</dbReference>
<dbReference type="PANTHER" id="PTHR43783:SF1">
    <property type="entry name" value="UDP-N-ACETYLGLUCOSAMINE 1-CARBOXYVINYLTRANSFERASE"/>
    <property type="match status" value="1"/>
</dbReference>
<dbReference type="Pfam" id="PF00275">
    <property type="entry name" value="EPSP_synthase"/>
    <property type="match status" value="1"/>
</dbReference>
<dbReference type="SUPFAM" id="SSF55205">
    <property type="entry name" value="EPT/RTPC-like"/>
    <property type="match status" value="1"/>
</dbReference>
<accession>P45821</accession>
<proteinExistence type="inferred from homology"/>
<comment type="function">
    <text evidence="1">Cell wall formation. Adds enolpyruvyl to UDP-N-acetylglucosamine.</text>
</comment>
<comment type="catalytic activity">
    <reaction evidence="1">
        <text>phosphoenolpyruvate + UDP-N-acetyl-alpha-D-glucosamine = UDP-N-acetyl-3-O-(1-carboxyvinyl)-alpha-D-glucosamine + phosphate</text>
        <dbReference type="Rhea" id="RHEA:18681"/>
        <dbReference type="ChEBI" id="CHEBI:43474"/>
        <dbReference type="ChEBI" id="CHEBI:57705"/>
        <dbReference type="ChEBI" id="CHEBI:58702"/>
        <dbReference type="ChEBI" id="CHEBI:68483"/>
        <dbReference type="EC" id="2.5.1.7"/>
    </reaction>
</comment>
<comment type="pathway">
    <text evidence="1">Cell wall biogenesis; peptidoglycan biosynthesis.</text>
</comment>
<comment type="subcellular location">
    <subcellularLocation>
        <location evidence="1">Cytoplasm</location>
    </subcellularLocation>
</comment>
<comment type="similarity">
    <text evidence="1">Belongs to the EPSP synthase family. MurA subfamily.</text>
</comment>
<name>MURA_MYCLE</name>
<sequence length="418" mass="44227">MAERFVVTGGNRLSGEVTVGGAKNSVLKLMAATLLAEGTSTITNCPDILDVPLMAEVLRGLGATVELYGDVARITSPDEPKYDADFAAVRQFRASVCVLGPLVGRCKQARVALPGGDAIGSRPLDMHQAGLRQLGARCNIEHGCVVASAETLRGAEIQLEFPSVGATENILMAAVVAEGVTTIHNAAREPDVVDLCTMLNQMGAQVEGVGSPTMTITGVPRLYPTEHRVIGDRIVAATWGIAAAMTRGDIAVTGVDPAHLQLVLHKLHDAGATVTQTDDSFRVAQYERPKAVNVATLPFPGFPTDLQPMAIALTSIADGTSMITENVFEARFRFVEEMIRLGADARTDGHHAVVRGLPQLSSAPVWCSDIRAGAGLVLAGLVADGDTEVYDVFHIDRGYPLFVENLANLGAEIERVCL</sequence>
<keyword id="KW-0131">Cell cycle</keyword>
<keyword id="KW-0132">Cell division</keyword>
<keyword id="KW-0133">Cell shape</keyword>
<keyword id="KW-0961">Cell wall biogenesis/degradation</keyword>
<keyword id="KW-0963">Cytoplasm</keyword>
<keyword id="KW-0573">Peptidoglycan synthesis</keyword>
<keyword id="KW-1185">Reference proteome</keyword>
<keyword id="KW-0808">Transferase</keyword>
<gene>
    <name evidence="1" type="primary">murA</name>
    <name type="synonym">murZ</name>
    <name type="ordered locus">ML1150</name>
</gene>